<name>PUR7_NEIMB</name>
<sequence>MSEIGLVKIYFGKVRDLYEIDDKRMLMVASDRLSAFDVILDDPIPSKGEILTQISNFWFKKLAHIMPNHFTGQTVYDVLPENEAKALEKRAVVAKKLTPVKVEAIVRGYLAGSGWKDYQKTGSVCGIQLPEGMQEAQQLPEVIFTPSTKAAVGDHDENISFEECGRIIGKELAEEVRAKAVRLYTEAAEYAKSRGIIICDTKFEFGLDENGTLTLMDEVLTPDSSRFWPADQYKVGTNPPSFDKQFVRDWLEQSGWNKKAPAPKVPADVIQKTVEKYREALTLLTQD</sequence>
<organism>
    <name type="scientific">Neisseria meningitidis serogroup B (strain ATCC BAA-335 / MC58)</name>
    <dbReference type="NCBI Taxonomy" id="122586"/>
    <lineage>
        <taxon>Bacteria</taxon>
        <taxon>Pseudomonadati</taxon>
        <taxon>Pseudomonadota</taxon>
        <taxon>Betaproteobacteria</taxon>
        <taxon>Neisseriales</taxon>
        <taxon>Neisseriaceae</taxon>
        <taxon>Neisseria</taxon>
    </lineage>
</organism>
<evidence type="ECO:0000255" key="1">
    <source>
        <dbReference type="HAMAP-Rule" id="MF_00137"/>
    </source>
</evidence>
<feature type="chain" id="PRO_0000100846" description="Phosphoribosylaminoimidazole-succinocarboxamide synthase">
    <location>
        <begin position="1"/>
        <end position="287"/>
    </location>
</feature>
<keyword id="KW-0067">ATP-binding</keyword>
<keyword id="KW-0436">Ligase</keyword>
<keyword id="KW-0547">Nucleotide-binding</keyword>
<keyword id="KW-0658">Purine biosynthesis</keyword>
<keyword id="KW-1185">Reference proteome</keyword>
<proteinExistence type="inferred from homology"/>
<dbReference type="EC" id="6.3.2.6" evidence="1"/>
<dbReference type="EMBL" id="AE002098">
    <property type="protein sequence ID" value="AAF41170.1"/>
    <property type="molecule type" value="Genomic_DNA"/>
</dbReference>
<dbReference type="PIR" id="B81161">
    <property type="entry name" value="B81161"/>
</dbReference>
<dbReference type="RefSeq" id="NP_273799.1">
    <property type="nucleotide sequence ID" value="NC_003112.2"/>
</dbReference>
<dbReference type="RefSeq" id="WP_002225440.1">
    <property type="nucleotide sequence ID" value="NC_003112.2"/>
</dbReference>
<dbReference type="SMR" id="Q9K063"/>
<dbReference type="FunCoup" id="Q9K063">
    <property type="interactions" value="452"/>
</dbReference>
<dbReference type="STRING" id="122586.NMB0757"/>
<dbReference type="PaxDb" id="122586-NMB0757"/>
<dbReference type="KEGG" id="nme:NMB0757"/>
<dbReference type="PATRIC" id="fig|122586.8.peg.961"/>
<dbReference type="HOGENOM" id="CLU_045637_0_2_4"/>
<dbReference type="InParanoid" id="Q9K063"/>
<dbReference type="OrthoDB" id="9801549at2"/>
<dbReference type="UniPathway" id="UPA00074">
    <property type="reaction ID" value="UER00131"/>
</dbReference>
<dbReference type="Proteomes" id="UP000000425">
    <property type="component" value="Chromosome"/>
</dbReference>
<dbReference type="GO" id="GO:0005524">
    <property type="term" value="F:ATP binding"/>
    <property type="evidence" value="ECO:0007669"/>
    <property type="project" value="UniProtKB-KW"/>
</dbReference>
<dbReference type="GO" id="GO:0004639">
    <property type="term" value="F:phosphoribosylaminoimidazolesuccinocarboxamide synthase activity"/>
    <property type="evidence" value="ECO:0000318"/>
    <property type="project" value="GO_Central"/>
</dbReference>
<dbReference type="GO" id="GO:0006189">
    <property type="term" value="P:'de novo' IMP biosynthetic process"/>
    <property type="evidence" value="ECO:0000318"/>
    <property type="project" value="GO_Central"/>
</dbReference>
<dbReference type="CDD" id="cd01414">
    <property type="entry name" value="SAICAR_synt_Sc"/>
    <property type="match status" value="1"/>
</dbReference>
<dbReference type="FunFam" id="3.30.200.20:FF:000365">
    <property type="entry name" value="Phosphoribosylaminoimidazole-succinocarboxamide synthase"/>
    <property type="match status" value="1"/>
</dbReference>
<dbReference type="FunFam" id="3.30.470.20:FF:000015">
    <property type="entry name" value="Phosphoribosylaminoimidazole-succinocarboxamide synthase"/>
    <property type="match status" value="1"/>
</dbReference>
<dbReference type="Gene3D" id="3.30.470.20">
    <property type="entry name" value="ATP-grasp fold, B domain"/>
    <property type="match status" value="1"/>
</dbReference>
<dbReference type="Gene3D" id="3.30.200.20">
    <property type="entry name" value="Phosphorylase Kinase, domain 1"/>
    <property type="match status" value="1"/>
</dbReference>
<dbReference type="HAMAP" id="MF_00137">
    <property type="entry name" value="SAICAR_synth"/>
    <property type="match status" value="1"/>
</dbReference>
<dbReference type="InterPro" id="IPR028923">
    <property type="entry name" value="SAICAR_synt/ADE2_N"/>
</dbReference>
<dbReference type="InterPro" id="IPR001636">
    <property type="entry name" value="SAICAR_synth"/>
</dbReference>
<dbReference type="InterPro" id="IPR018236">
    <property type="entry name" value="SAICAR_synthetase_CS"/>
</dbReference>
<dbReference type="NCBIfam" id="NF010568">
    <property type="entry name" value="PRK13961.1"/>
    <property type="match status" value="1"/>
</dbReference>
<dbReference type="NCBIfam" id="TIGR00081">
    <property type="entry name" value="purC"/>
    <property type="match status" value="1"/>
</dbReference>
<dbReference type="PANTHER" id="PTHR43700">
    <property type="entry name" value="PHOSPHORIBOSYLAMINOIMIDAZOLE-SUCCINOCARBOXAMIDE SYNTHASE"/>
    <property type="match status" value="1"/>
</dbReference>
<dbReference type="PANTHER" id="PTHR43700:SF1">
    <property type="entry name" value="PHOSPHORIBOSYLAMINOIMIDAZOLE-SUCCINOCARBOXAMIDE SYNTHASE"/>
    <property type="match status" value="1"/>
</dbReference>
<dbReference type="Pfam" id="PF01259">
    <property type="entry name" value="SAICAR_synt"/>
    <property type="match status" value="1"/>
</dbReference>
<dbReference type="SUPFAM" id="SSF56104">
    <property type="entry name" value="SAICAR synthase-like"/>
    <property type="match status" value="1"/>
</dbReference>
<dbReference type="PROSITE" id="PS01057">
    <property type="entry name" value="SAICAR_SYNTHETASE_1"/>
    <property type="match status" value="1"/>
</dbReference>
<dbReference type="PROSITE" id="PS01058">
    <property type="entry name" value="SAICAR_SYNTHETASE_2"/>
    <property type="match status" value="1"/>
</dbReference>
<accession>Q9K063</accession>
<protein>
    <recommendedName>
        <fullName evidence="1">Phosphoribosylaminoimidazole-succinocarboxamide synthase</fullName>
        <ecNumber evidence="1">6.3.2.6</ecNumber>
    </recommendedName>
    <alternativeName>
        <fullName evidence="1">SAICAR synthetase</fullName>
    </alternativeName>
</protein>
<comment type="catalytic activity">
    <reaction evidence="1">
        <text>5-amino-1-(5-phospho-D-ribosyl)imidazole-4-carboxylate + L-aspartate + ATP = (2S)-2-[5-amino-1-(5-phospho-beta-D-ribosyl)imidazole-4-carboxamido]succinate + ADP + phosphate + 2 H(+)</text>
        <dbReference type="Rhea" id="RHEA:22628"/>
        <dbReference type="ChEBI" id="CHEBI:15378"/>
        <dbReference type="ChEBI" id="CHEBI:29991"/>
        <dbReference type="ChEBI" id="CHEBI:30616"/>
        <dbReference type="ChEBI" id="CHEBI:43474"/>
        <dbReference type="ChEBI" id="CHEBI:58443"/>
        <dbReference type="ChEBI" id="CHEBI:77657"/>
        <dbReference type="ChEBI" id="CHEBI:456216"/>
        <dbReference type="EC" id="6.3.2.6"/>
    </reaction>
</comment>
<comment type="pathway">
    <text evidence="1">Purine metabolism; IMP biosynthesis via de novo pathway; 5-amino-1-(5-phospho-D-ribosyl)imidazole-4-carboxamide from 5-amino-1-(5-phospho-D-ribosyl)imidazole-4-carboxylate: step 1/2.</text>
</comment>
<comment type="similarity">
    <text evidence="1">Belongs to the SAICAR synthetase family.</text>
</comment>
<reference key="1">
    <citation type="journal article" date="2000" name="Science">
        <title>Complete genome sequence of Neisseria meningitidis serogroup B strain MC58.</title>
        <authorList>
            <person name="Tettelin H."/>
            <person name="Saunders N.J."/>
            <person name="Heidelberg J.F."/>
            <person name="Jeffries A.C."/>
            <person name="Nelson K.E."/>
            <person name="Eisen J.A."/>
            <person name="Ketchum K.A."/>
            <person name="Hood D.W."/>
            <person name="Peden J.F."/>
            <person name="Dodson R.J."/>
            <person name="Nelson W.C."/>
            <person name="Gwinn M.L."/>
            <person name="DeBoy R.T."/>
            <person name="Peterson J.D."/>
            <person name="Hickey E.K."/>
            <person name="Haft D.H."/>
            <person name="Salzberg S.L."/>
            <person name="White O."/>
            <person name="Fleischmann R.D."/>
            <person name="Dougherty B.A."/>
            <person name="Mason T.M."/>
            <person name="Ciecko A."/>
            <person name="Parksey D.S."/>
            <person name="Blair E."/>
            <person name="Cittone H."/>
            <person name="Clark E.B."/>
            <person name="Cotton M.D."/>
            <person name="Utterback T.R."/>
            <person name="Khouri H.M."/>
            <person name="Qin H."/>
            <person name="Vamathevan J.J."/>
            <person name="Gill J."/>
            <person name="Scarlato V."/>
            <person name="Masignani V."/>
            <person name="Pizza M."/>
            <person name="Grandi G."/>
            <person name="Sun L."/>
            <person name="Smith H.O."/>
            <person name="Fraser C.M."/>
            <person name="Moxon E.R."/>
            <person name="Rappuoli R."/>
            <person name="Venter J.C."/>
        </authorList>
    </citation>
    <scope>NUCLEOTIDE SEQUENCE [LARGE SCALE GENOMIC DNA]</scope>
    <source>
        <strain>ATCC BAA-335 / MC58</strain>
    </source>
</reference>
<gene>
    <name evidence="1" type="primary">purC</name>
    <name type="ordered locus">NMB0757</name>
</gene>